<organism>
    <name type="scientific">Escherichia coli O139:H28 (strain E24377A / ETEC)</name>
    <dbReference type="NCBI Taxonomy" id="331111"/>
    <lineage>
        <taxon>Bacteria</taxon>
        <taxon>Pseudomonadati</taxon>
        <taxon>Pseudomonadota</taxon>
        <taxon>Gammaproteobacteria</taxon>
        <taxon>Enterobacterales</taxon>
        <taxon>Enterobacteriaceae</taxon>
        <taxon>Escherichia</taxon>
    </lineage>
</organism>
<feature type="chain" id="PRO_0000316672" description="Phosphoenolpyruvate synthase regulatory protein">
    <location>
        <begin position="1"/>
        <end position="277"/>
    </location>
</feature>
<feature type="binding site" evidence="1">
    <location>
        <begin position="157"/>
        <end position="164"/>
    </location>
    <ligand>
        <name>ADP</name>
        <dbReference type="ChEBI" id="CHEBI:456216"/>
    </ligand>
</feature>
<keyword id="KW-0418">Kinase</keyword>
<keyword id="KW-0547">Nucleotide-binding</keyword>
<keyword id="KW-1185">Reference proteome</keyword>
<keyword id="KW-0723">Serine/threonine-protein kinase</keyword>
<keyword id="KW-0808">Transferase</keyword>
<sequence>MDNAVDRHVFYISDGTAITAEVLGHAVMSQFPVTISSITLPFVENESRARAVKDQIDAIYHQTGVRPLVFYSIVLPEIRAIILQSEGFCQDIVQALVAPLQQEMKLDPTPIAHRTHGLNPNNLNKYDARIAAIDYTLAHDDGISLRNLDQAQVILLGVSRCGKTPTSLYLAMQFGIRAANYPFIADDMDNLVLPASLKPLQHKLFGLTIDPERLAAIREERRENSRYASLRQCRMEVAEVEALYRKNQIPWINSTNYSVEEIATKILDIMGLSRRMY</sequence>
<gene>
    <name evidence="1" type="primary">ppsR</name>
    <name type="ordered locus">EcE24377A_1921</name>
</gene>
<reference key="1">
    <citation type="journal article" date="2008" name="J. Bacteriol.">
        <title>The pangenome structure of Escherichia coli: comparative genomic analysis of E. coli commensal and pathogenic isolates.</title>
        <authorList>
            <person name="Rasko D.A."/>
            <person name="Rosovitz M.J."/>
            <person name="Myers G.S.A."/>
            <person name="Mongodin E.F."/>
            <person name="Fricke W.F."/>
            <person name="Gajer P."/>
            <person name="Crabtree J."/>
            <person name="Sebaihia M."/>
            <person name="Thomson N.R."/>
            <person name="Chaudhuri R."/>
            <person name="Henderson I.R."/>
            <person name="Sperandio V."/>
            <person name="Ravel J."/>
        </authorList>
    </citation>
    <scope>NUCLEOTIDE SEQUENCE [LARGE SCALE GENOMIC DNA]</scope>
    <source>
        <strain>E24377A / ETEC</strain>
    </source>
</reference>
<proteinExistence type="inferred from homology"/>
<name>PSRP_ECO24</name>
<accession>A7ZMH0</accession>
<evidence type="ECO:0000255" key="1">
    <source>
        <dbReference type="HAMAP-Rule" id="MF_01062"/>
    </source>
</evidence>
<comment type="function">
    <text evidence="1">Bifunctional serine/threonine kinase and phosphorylase involved in the regulation of the phosphoenolpyruvate synthase (PEPS) by catalyzing its phosphorylation/dephosphorylation.</text>
</comment>
<comment type="catalytic activity">
    <reaction evidence="1">
        <text>[pyruvate, water dikinase] + ADP = [pyruvate, water dikinase]-phosphate + AMP + H(+)</text>
        <dbReference type="Rhea" id="RHEA:46020"/>
        <dbReference type="Rhea" id="RHEA-COMP:11425"/>
        <dbReference type="Rhea" id="RHEA-COMP:11426"/>
        <dbReference type="ChEBI" id="CHEBI:15378"/>
        <dbReference type="ChEBI" id="CHEBI:43176"/>
        <dbReference type="ChEBI" id="CHEBI:68546"/>
        <dbReference type="ChEBI" id="CHEBI:456215"/>
        <dbReference type="ChEBI" id="CHEBI:456216"/>
        <dbReference type="EC" id="2.7.11.33"/>
    </reaction>
</comment>
<comment type="catalytic activity">
    <reaction evidence="1">
        <text>[pyruvate, water dikinase]-phosphate + phosphate + H(+) = [pyruvate, water dikinase] + diphosphate</text>
        <dbReference type="Rhea" id="RHEA:48580"/>
        <dbReference type="Rhea" id="RHEA-COMP:11425"/>
        <dbReference type="Rhea" id="RHEA-COMP:11426"/>
        <dbReference type="ChEBI" id="CHEBI:15378"/>
        <dbReference type="ChEBI" id="CHEBI:33019"/>
        <dbReference type="ChEBI" id="CHEBI:43176"/>
        <dbReference type="ChEBI" id="CHEBI:43474"/>
        <dbReference type="ChEBI" id="CHEBI:68546"/>
        <dbReference type="EC" id="2.7.4.28"/>
    </reaction>
</comment>
<comment type="similarity">
    <text evidence="1">Belongs to the pyruvate, phosphate/water dikinase regulatory protein family. PSRP subfamily.</text>
</comment>
<dbReference type="EC" id="2.7.11.33" evidence="1"/>
<dbReference type="EC" id="2.7.4.28" evidence="1"/>
<dbReference type="EMBL" id="CP000800">
    <property type="protein sequence ID" value="ABV19748.1"/>
    <property type="molecule type" value="Genomic_DNA"/>
</dbReference>
<dbReference type="RefSeq" id="WP_000368046.1">
    <property type="nucleotide sequence ID" value="NC_009801.1"/>
</dbReference>
<dbReference type="SMR" id="A7ZMH0"/>
<dbReference type="GeneID" id="93775866"/>
<dbReference type="KEGG" id="ecw:EcE24377A_1921"/>
<dbReference type="HOGENOM" id="CLU_046206_1_0_6"/>
<dbReference type="Proteomes" id="UP000001122">
    <property type="component" value="Chromosome"/>
</dbReference>
<dbReference type="GO" id="GO:0043531">
    <property type="term" value="F:ADP binding"/>
    <property type="evidence" value="ECO:0007669"/>
    <property type="project" value="UniProtKB-UniRule"/>
</dbReference>
<dbReference type="GO" id="GO:0005524">
    <property type="term" value="F:ATP binding"/>
    <property type="evidence" value="ECO:0007669"/>
    <property type="project" value="InterPro"/>
</dbReference>
<dbReference type="GO" id="GO:0016776">
    <property type="term" value="F:phosphotransferase activity, phosphate group as acceptor"/>
    <property type="evidence" value="ECO:0007669"/>
    <property type="project" value="UniProtKB-UniRule"/>
</dbReference>
<dbReference type="GO" id="GO:0004674">
    <property type="term" value="F:protein serine/threonine kinase activity"/>
    <property type="evidence" value="ECO:0007669"/>
    <property type="project" value="UniProtKB-UniRule"/>
</dbReference>
<dbReference type="HAMAP" id="MF_01062">
    <property type="entry name" value="PSRP"/>
    <property type="match status" value="1"/>
</dbReference>
<dbReference type="InterPro" id="IPR005177">
    <property type="entry name" value="Kinase-pyrophosphorylase"/>
</dbReference>
<dbReference type="InterPro" id="IPR026530">
    <property type="entry name" value="PSRP"/>
</dbReference>
<dbReference type="NCBIfam" id="NF003742">
    <property type="entry name" value="PRK05339.1"/>
    <property type="match status" value="1"/>
</dbReference>
<dbReference type="PANTHER" id="PTHR31756">
    <property type="entry name" value="PYRUVATE, PHOSPHATE DIKINASE REGULATORY PROTEIN 1, CHLOROPLASTIC"/>
    <property type="match status" value="1"/>
</dbReference>
<dbReference type="PANTHER" id="PTHR31756:SF3">
    <property type="entry name" value="PYRUVATE, PHOSPHATE DIKINASE REGULATORY PROTEIN 1, CHLOROPLASTIC"/>
    <property type="match status" value="1"/>
</dbReference>
<dbReference type="Pfam" id="PF03618">
    <property type="entry name" value="Kinase-PPPase"/>
    <property type="match status" value="1"/>
</dbReference>
<protein>
    <recommendedName>
        <fullName evidence="1">Phosphoenolpyruvate synthase regulatory protein</fullName>
        <shortName evidence="1">PEP synthase regulatory protein</shortName>
        <shortName evidence="1">PSRP</shortName>
        <ecNumber evidence="1">2.7.11.33</ecNumber>
        <ecNumber evidence="1">2.7.4.28</ecNumber>
    </recommendedName>
    <alternativeName>
        <fullName evidence="1">Pyruvate, water dikinase regulatory protein</fullName>
    </alternativeName>
</protein>